<reference key="1">
    <citation type="journal article" date="2005" name="Science">
        <title>The transcriptional landscape of the mammalian genome.</title>
        <authorList>
            <person name="Carninci P."/>
            <person name="Kasukawa T."/>
            <person name="Katayama S."/>
            <person name="Gough J."/>
            <person name="Frith M.C."/>
            <person name="Maeda N."/>
            <person name="Oyama R."/>
            <person name="Ravasi T."/>
            <person name="Lenhard B."/>
            <person name="Wells C."/>
            <person name="Kodzius R."/>
            <person name="Shimokawa K."/>
            <person name="Bajic V.B."/>
            <person name="Brenner S.E."/>
            <person name="Batalov S."/>
            <person name="Forrest A.R."/>
            <person name="Zavolan M."/>
            <person name="Davis M.J."/>
            <person name="Wilming L.G."/>
            <person name="Aidinis V."/>
            <person name="Allen J.E."/>
            <person name="Ambesi-Impiombato A."/>
            <person name="Apweiler R."/>
            <person name="Aturaliya R.N."/>
            <person name="Bailey T.L."/>
            <person name="Bansal M."/>
            <person name="Baxter L."/>
            <person name="Beisel K.W."/>
            <person name="Bersano T."/>
            <person name="Bono H."/>
            <person name="Chalk A.M."/>
            <person name="Chiu K.P."/>
            <person name="Choudhary V."/>
            <person name="Christoffels A."/>
            <person name="Clutterbuck D.R."/>
            <person name="Crowe M.L."/>
            <person name="Dalla E."/>
            <person name="Dalrymple B.P."/>
            <person name="de Bono B."/>
            <person name="Della Gatta G."/>
            <person name="di Bernardo D."/>
            <person name="Down T."/>
            <person name="Engstrom P."/>
            <person name="Fagiolini M."/>
            <person name="Faulkner G."/>
            <person name="Fletcher C.F."/>
            <person name="Fukushima T."/>
            <person name="Furuno M."/>
            <person name="Futaki S."/>
            <person name="Gariboldi M."/>
            <person name="Georgii-Hemming P."/>
            <person name="Gingeras T.R."/>
            <person name="Gojobori T."/>
            <person name="Green R.E."/>
            <person name="Gustincich S."/>
            <person name="Harbers M."/>
            <person name="Hayashi Y."/>
            <person name="Hensch T.K."/>
            <person name="Hirokawa N."/>
            <person name="Hill D."/>
            <person name="Huminiecki L."/>
            <person name="Iacono M."/>
            <person name="Ikeo K."/>
            <person name="Iwama A."/>
            <person name="Ishikawa T."/>
            <person name="Jakt M."/>
            <person name="Kanapin A."/>
            <person name="Katoh M."/>
            <person name="Kawasawa Y."/>
            <person name="Kelso J."/>
            <person name="Kitamura H."/>
            <person name="Kitano H."/>
            <person name="Kollias G."/>
            <person name="Krishnan S.P."/>
            <person name="Kruger A."/>
            <person name="Kummerfeld S.K."/>
            <person name="Kurochkin I.V."/>
            <person name="Lareau L.F."/>
            <person name="Lazarevic D."/>
            <person name="Lipovich L."/>
            <person name="Liu J."/>
            <person name="Liuni S."/>
            <person name="McWilliam S."/>
            <person name="Madan Babu M."/>
            <person name="Madera M."/>
            <person name="Marchionni L."/>
            <person name="Matsuda H."/>
            <person name="Matsuzawa S."/>
            <person name="Miki H."/>
            <person name="Mignone F."/>
            <person name="Miyake S."/>
            <person name="Morris K."/>
            <person name="Mottagui-Tabar S."/>
            <person name="Mulder N."/>
            <person name="Nakano N."/>
            <person name="Nakauchi H."/>
            <person name="Ng P."/>
            <person name="Nilsson R."/>
            <person name="Nishiguchi S."/>
            <person name="Nishikawa S."/>
            <person name="Nori F."/>
            <person name="Ohara O."/>
            <person name="Okazaki Y."/>
            <person name="Orlando V."/>
            <person name="Pang K.C."/>
            <person name="Pavan W.J."/>
            <person name="Pavesi G."/>
            <person name="Pesole G."/>
            <person name="Petrovsky N."/>
            <person name="Piazza S."/>
            <person name="Reed J."/>
            <person name="Reid J.F."/>
            <person name="Ring B.Z."/>
            <person name="Ringwald M."/>
            <person name="Rost B."/>
            <person name="Ruan Y."/>
            <person name="Salzberg S.L."/>
            <person name="Sandelin A."/>
            <person name="Schneider C."/>
            <person name="Schoenbach C."/>
            <person name="Sekiguchi K."/>
            <person name="Semple C.A."/>
            <person name="Seno S."/>
            <person name="Sessa L."/>
            <person name="Sheng Y."/>
            <person name="Shibata Y."/>
            <person name="Shimada H."/>
            <person name="Shimada K."/>
            <person name="Silva D."/>
            <person name="Sinclair B."/>
            <person name="Sperling S."/>
            <person name="Stupka E."/>
            <person name="Sugiura K."/>
            <person name="Sultana R."/>
            <person name="Takenaka Y."/>
            <person name="Taki K."/>
            <person name="Tammoja K."/>
            <person name="Tan S.L."/>
            <person name="Tang S."/>
            <person name="Taylor M.S."/>
            <person name="Tegner J."/>
            <person name="Teichmann S.A."/>
            <person name="Ueda H.R."/>
            <person name="van Nimwegen E."/>
            <person name="Verardo R."/>
            <person name="Wei C.L."/>
            <person name="Yagi K."/>
            <person name="Yamanishi H."/>
            <person name="Zabarovsky E."/>
            <person name="Zhu S."/>
            <person name="Zimmer A."/>
            <person name="Hide W."/>
            <person name="Bult C."/>
            <person name="Grimmond S.M."/>
            <person name="Teasdale R.D."/>
            <person name="Liu E.T."/>
            <person name="Brusic V."/>
            <person name="Quackenbush J."/>
            <person name="Wahlestedt C."/>
            <person name="Mattick J.S."/>
            <person name="Hume D.A."/>
            <person name="Kai C."/>
            <person name="Sasaki D."/>
            <person name="Tomaru Y."/>
            <person name="Fukuda S."/>
            <person name="Kanamori-Katayama M."/>
            <person name="Suzuki M."/>
            <person name="Aoki J."/>
            <person name="Arakawa T."/>
            <person name="Iida J."/>
            <person name="Imamura K."/>
            <person name="Itoh M."/>
            <person name="Kato T."/>
            <person name="Kawaji H."/>
            <person name="Kawagashira N."/>
            <person name="Kawashima T."/>
            <person name="Kojima M."/>
            <person name="Kondo S."/>
            <person name="Konno H."/>
            <person name="Nakano K."/>
            <person name="Ninomiya N."/>
            <person name="Nishio T."/>
            <person name="Okada M."/>
            <person name="Plessy C."/>
            <person name="Shibata K."/>
            <person name="Shiraki T."/>
            <person name="Suzuki S."/>
            <person name="Tagami M."/>
            <person name="Waki K."/>
            <person name="Watahiki A."/>
            <person name="Okamura-Oho Y."/>
            <person name="Suzuki H."/>
            <person name="Kawai J."/>
            <person name="Hayashizaki Y."/>
        </authorList>
    </citation>
    <scope>NUCLEOTIDE SEQUENCE [LARGE SCALE MRNA] (ISOFORM 1)</scope>
    <source>
        <strain>C57BL/6J</strain>
        <tissue>Thymus</tissue>
    </source>
</reference>
<reference key="2">
    <citation type="journal article" date="2004" name="Genome Res.">
        <title>The status, quality, and expansion of the NIH full-length cDNA project: the Mammalian Gene Collection (MGC).</title>
        <authorList>
            <consortium name="The MGC Project Team"/>
        </authorList>
    </citation>
    <scope>NUCLEOTIDE SEQUENCE [LARGE SCALE MRNA] OF 39-847 (ISOFORM 2)</scope>
    <source>
        <tissue>Eye</tissue>
    </source>
</reference>
<reference key="3">
    <citation type="journal article" date="2010" name="Cell">
        <title>A tissue-specific atlas of mouse protein phosphorylation and expression.</title>
        <authorList>
            <person name="Huttlin E.L."/>
            <person name="Jedrychowski M.P."/>
            <person name="Elias J.E."/>
            <person name="Goswami T."/>
            <person name="Rad R."/>
            <person name="Beausoleil S.A."/>
            <person name="Villen J."/>
            <person name="Haas W."/>
            <person name="Sowa M.E."/>
            <person name="Gygi S.P."/>
        </authorList>
    </citation>
    <scope>IDENTIFICATION BY MASS SPECTROMETRY [LARGE SCALE ANALYSIS]</scope>
    <source>
        <tissue>Kidney</tissue>
        <tissue>Liver</tissue>
        <tissue>Pancreas</tissue>
        <tissue>Spleen</tissue>
        <tissue>Testis</tissue>
    </source>
</reference>
<proteinExistence type="evidence at protein level"/>
<organism>
    <name type="scientific">Mus musculus</name>
    <name type="common">Mouse</name>
    <dbReference type="NCBI Taxonomy" id="10090"/>
    <lineage>
        <taxon>Eukaryota</taxon>
        <taxon>Metazoa</taxon>
        <taxon>Chordata</taxon>
        <taxon>Craniata</taxon>
        <taxon>Vertebrata</taxon>
        <taxon>Euteleostomi</taxon>
        <taxon>Mammalia</taxon>
        <taxon>Eutheria</taxon>
        <taxon>Euarchontoglires</taxon>
        <taxon>Glires</taxon>
        <taxon>Rodentia</taxon>
        <taxon>Myomorpha</taxon>
        <taxon>Muroidea</taxon>
        <taxon>Muridae</taxon>
        <taxon>Murinae</taxon>
        <taxon>Mus</taxon>
        <taxon>Mus</taxon>
    </lineage>
</organism>
<gene>
    <name type="primary">Ttc27</name>
</gene>
<name>TTC27_MOUSE</name>
<accession>Q8CD92</accession>
<accession>Q3THU0</accession>
<accession>Q8C7S8</accession>
<accession>Q8K1D9</accession>
<keyword id="KW-0025">Alternative splicing</keyword>
<keyword id="KW-1185">Reference proteome</keyword>
<keyword id="KW-0677">Repeat</keyword>
<keyword id="KW-0802">TPR repeat</keyword>
<comment type="alternative products">
    <event type="alternative splicing"/>
    <isoform>
        <id>Q8CD92-1</id>
        <name>1</name>
        <sequence type="displayed"/>
    </isoform>
    <isoform>
        <id>Q8CD92-2</id>
        <name>2</name>
        <sequence type="described" ref="VSP_026720"/>
    </isoform>
</comment>
<comment type="similarity">
    <text evidence="2">Belongs to the TTC27 family.</text>
</comment>
<comment type="sequence caution" evidence="2">
    <conflict type="erroneous initiation">
        <sequence resource="EMBL-CDS" id="AAH21912"/>
    </conflict>
</comment>
<protein>
    <recommendedName>
        <fullName>Tetratricopeptide repeat protein 27</fullName>
        <shortName>TPR repeat protein 27</shortName>
    </recommendedName>
</protein>
<sequence length="847" mass="96431">MPGMMWTPELALLRGFSTEAERLVWKQEGICGSDIGVFLELLLEGSYEALFFHSTTQTILNSTMMAEEKIDSYLEKQIVNFLDCSTDLEEIERQQLVFLLGVSSLQLFVQSNWTGPLVDLHPQDFLPSGLLEQFSEVKGLDAIIMGLLILDGESVYSLTSKPILLLIARIILVNIRHKLTALQSLPWWTLRYVNIHQQLLEERSPQLFALAKNCIDQVMKQENLFEGDSGRLLAIQFHLECAHVFLYYYEYKEAKDQFSTAKDISKLEIDLTGALGKRTRFQENYVAQLIVDVRRKEAVPFSCEFSPAPTPQECLAKNLELNDDTVLNEIKLADSERFQMPDLCAEELAVVLGVCTNFQKNNPVHKLTEEELLAFTSCLLSQPKFWAIQMSALILRTKLERGSTRRVERAMRQTQALADQFEDKATSVLERLKIFYCCQVPPHWAVQRQLAGLLFELGCTSSALQIFEKLEMWEDVVICHERAGRHGKAEEILRQELEKKETPGLYCLLGDVLQDHSCYDKAWELSRHRSARAQRSKALLHLRNKEFRECVECFERSVKINPMQLGVWFSLGCAYLALEDYGGSAKAFQRCVTLEPDNAEAWNNLSTSYIRLKQKVKAFRTLQEALKCNYEHWQIWENYILTSTDVGEFGEAIKAYHRLLDLRDKYKDIQVLKILVQAVVNDMTDRSGAVASSLKGKLQELFGRITSRVTNDGEVWRLYAQVHGNGQSEKPDENDKAFQCLSKAYKCDTQSSCWEKDATAFKEVVQRAIGLAHVAMKCAESKSIPQEAVQTLSSVRLNLRGLLSKAKQNFTDVVSGEVSGELASEIAAVNALEAELQDLSNQLRNRY</sequence>
<dbReference type="EMBL" id="AK030942">
    <property type="protein sequence ID" value="BAC27189.1"/>
    <property type="molecule type" value="mRNA"/>
</dbReference>
<dbReference type="EMBL" id="AK049324">
    <property type="protein sequence ID" value="BAC33683.1"/>
    <property type="molecule type" value="mRNA"/>
</dbReference>
<dbReference type="EMBL" id="AK168138">
    <property type="protein sequence ID" value="BAE40106.1"/>
    <property type="molecule type" value="mRNA"/>
</dbReference>
<dbReference type="EMBL" id="BC021912">
    <property type="protein sequence ID" value="AAH21912.1"/>
    <property type="status" value="ALT_INIT"/>
    <property type="molecule type" value="mRNA"/>
</dbReference>
<dbReference type="CCDS" id="CCDS28972.1">
    <molecule id="Q8CD92-1"/>
</dbReference>
<dbReference type="RefSeq" id="NP_690030.3">
    <molecule id="Q8CD92-1"/>
    <property type="nucleotide sequence ID" value="NM_152817.4"/>
</dbReference>
<dbReference type="RefSeq" id="XP_006525088.1">
    <molecule id="Q8CD92-2"/>
    <property type="nucleotide sequence ID" value="XM_006525025.5"/>
</dbReference>
<dbReference type="SMR" id="Q8CD92"/>
<dbReference type="BioGRID" id="216567">
    <property type="interactions" value="6"/>
</dbReference>
<dbReference type="FunCoup" id="Q8CD92">
    <property type="interactions" value="1023"/>
</dbReference>
<dbReference type="IntAct" id="Q8CD92">
    <property type="interactions" value="1"/>
</dbReference>
<dbReference type="MINT" id="Q8CD92"/>
<dbReference type="STRING" id="10090.ENSMUSP00000024882"/>
<dbReference type="GlyGen" id="Q8CD92">
    <property type="glycosylation" value="1 site"/>
</dbReference>
<dbReference type="iPTMnet" id="Q8CD92"/>
<dbReference type="PhosphoSitePlus" id="Q8CD92"/>
<dbReference type="SwissPalm" id="Q8CD92"/>
<dbReference type="PaxDb" id="10090-ENSMUSP00000024882"/>
<dbReference type="PeptideAtlas" id="Q8CD92"/>
<dbReference type="ProteomicsDB" id="298326">
    <molecule id="Q8CD92-1"/>
</dbReference>
<dbReference type="ProteomicsDB" id="298327">
    <molecule id="Q8CD92-2"/>
</dbReference>
<dbReference type="Pumba" id="Q8CD92"/>
<dbReference type="Antibodypedia" id="29210">
    <property type="antibodies" value="85 antibodies from 20 providers"/>
</dbReference>
<dbReference type="Ensembl" id="ENSMUST00000024882.8">
    <molecule id="Q8CD92-1"/>
    <property type="protein sequence ID" value="ENSMUSP00000024882.7"/>
    <property type="gene ID" value="ENSMUSG00000024078.8"/>
</dbReference>
<dbReference type="Ensembl" id="ENSMUST00000234568.2">
    <molecule id="Q8CD92-2"/>
    <property type="protein sequence ID" value="ENSMUSP00000157097.2"/>
    <property type="gene ID" value="ENSMUSG00000024078.8"/>
</dbReference>
<dbReference type="GeneID" id="74196"/>
<dbReference type="KEGG" id="mmu:74196"/>
<dbReference type="UCSC" id="uc008dok.2">
    <molecule id="Q8CD92-1"/>
    <property type="organism name" value="mouse"/>
</dbReference>
<dbReference type="UCSC" id="uc008dol.1">
    <molecule id="Q8CD92-2"/>
    <property type="organism name" value="mouse"/>
</dbReference>
<dbReference type="AGR" id="MGI:1921446"/>
<dbReference type="CTD" id="55622"/>
<dbReference type="MGI" id="MGI:1921446">
    <property type="gene designation" value="Ttc27"/>
</dbReference>
<dbReference type="VEuPathDB" id="HostDB:ENSMUSG00000024078"/>
<dbReference type="eggNOG" id="KOG1128">
    <property type="taxonomic scope" value="Eukaryota"/>
</dbReference>
<dbReference type="GeneTree" id="ENSGT00500000044929"/>
<dbReference type="HOGENOM" id="CLU_004905_2_0_1"/>
<dbReference type="InParanoid" id="Q8CD92"/>
<dbReference type="OMA" id="NNRYARA"/>
<dbReference type="OrthoDB" id="1936594at2759"/>
<dbReference type="PhylomeDB" id="Q8CD92"/>
<dbReference type="TreeFam" id="TF105894"/>
<dbReference type="BioGRID-ORCS" id="74196">
    <property type="hits" value="27 hits in 78 CRISPR screens"/>
</dbReference>
<dbReference type="ChiTaRS" id="Ttc27">
    <property type="organism name" value="mouse"/>
</dbReference>
<dbReference type="PRO" id="PR:Q8CD92"/>
<dbReference type="Proteomes" id="UP000000589">
    <property type="component" value="Chromosome 17"/>
</dbReference>
<dbReference type="RNAct" id="Q8CD92">
    <property type="molecule type" value="protein"/>
</dbReference>
<dbReference type="Bgee" id="ENSMUSG00000024078">
    <property type="expression patterns" value="Expressed in animal zygote and 234 other cell types or tissues"/>
</dbReference>
<dbReference type="ExpressionAtlas" id="Q8CD92">
    <property type="expression patterns" value="baseline and differential"/>
</dbReference>
<dbReference type="Gene3D" id="1.25.40.10">
    <property type="entry name" value="Tetratricopeptide repeat domain"/>
    <property type="match status" value="1"/>
</dbReference>
<dbReference type="InterPro" id="IPR011990">
    <property type="entry name" value="TPR-like_helical_dom_sf"/>
</dbReference>
<dbReference type="InterPro" id="IPR019734">
    <property type="entry name" value="TPR_rpt"/>
</dbReference>
<dbReference type="InterPro" id="IPR044244">
    <property type="entry name" value="TTC27/Emw1"/>
</dbReference>
<dbReference type="PANTHER" id="PTHR16193">
    <property type="entry name" value="TETRATRICOPEPTIDE REPEAT PROTEIN 27"/>
    <property type="match status" value="1"/>
</dbReference>
<dbReference type="PANTHER" id="PTHR16193:SF0">
    <property type="entry name" value="TETRATRICOPEPTIDE REPEAT PROTEIN 27"/>
    <property type="match status" value="1"/>
</dbReference>
<dbReference type="Pfam" id="PF13432">
    <property type="entry name" value="TPR_16"/>
    <property type="match status" value="1"/>
</dbReference>
<dbReference type="SMART" id="SM00028">
    <property type="entry name" value="TPR"/>
    <property type="match status" value="4"/>
</dbReference>
<dbReference type="SUPFAM" id="SSF48452">
    <property type="entry name" value="TPR-like"/>
    <property type="match status" value="1"/>
</dbReference>
<dbReference type="PROSITE" id="PS50005">
    <property type="entry name" value="TPR"/>
    <property type="match status" value="4"/>
</dbReference>
<dbReference type="PROSITE" id="PS50293">
    <property type="entry name" value="TPR_REGION"/>
    <property type="match status" value="1"/>
</dbReference>
<evidence type="ECO:0000303" key="1">
    <source>
    </source>
</evidence>
<evidence type="ECO:0000305" key="2"/>
<feature type="chain" id="PRO_0000295097" description="Tetratricopeptide repeat protein 27">
    <location>
        <begin position="1"/>
        <end position="847"/>
    </location>
</feature>
<feature type="repeat" description="TPR 1">
    <location>
        <begin position="457"/>
        <end position="490"/>
    </location>
</feature>
<feature type="repeat" description="TPR 2">
    <location>
        <begin position="496"/>
        <end position="529"/>
    </location>
</feature>
<feature type="repeat" description="TPR 3">
    <location>
        <begin position="531"/>
        <end position="564"/>
    </location>
</feature>
<feature type="repeat" description="TPR 4">
    <location>
        <begin position="565"/>
        <end position="598"/>
    </location>
</feature>
<feature type="repeat" description="TPR 5">
    <location>
        <begin position="600"/>
        <end position="632"/>
    </location>
</feature>
<feature type="repeat" description="TPR 6">
    <location>
        <begin position="633"/>
        <end position="666"/>
    </location>
</feature>
<feature type="splice variant" id="VSP_026720" description="In isoform 2." evidence="1">
    <location>
        <position position="808"/>
    </location>
</feature>
<feature type="sequence conflict" description="In Ref. 1; BAC27189." evidence="2" ref="1">
    <original>L</original>
    <variation>R</variation>
    <location>
        <position position="352"/>
    </location>
</feature>
<feature type="sequence conflict" description="In Ref. 1; BAE40106." evidence="2" ref="1">
    <original>Q</original>
    <variation>E</variation>
    <location>
        <position position="359"/>
    </location>
</feature>
<feature type="sequence conflict" description="In Ref. 1; BAE40106." evidence="2" ref="1">
    <original>M</original>
    <variation>T</variation>
    <location>
        <position position="390"/>
    </location>
</feature>
<feature type="sequence conflict" description="In Ref. 1; BAE40106." evidence="2" ref="1">
    <original>R</original>
    <variation>H</variation>
    <location>
        <position position="590"/>
    </location>
</feature>
<feature type="sequence conflict" description="In Ref. 1; BAC27189." evidence="2" ref="1">
    <original>E</original>
    <variation>K</variation>
    <location>
        <position position="733"/>
    </location>
</feature>
<feature type="sequence conflict" description="In Ref. 1; BAE40106." evidence="2" ref="1">
    <original>I</original>
    <variation>S</variation>
    <location>
        <position position="784"/>
    </location>
</feature>
<feature type="sequence conflict" description="In Ref. 1; BAC33683." evidence="2" ref="1">
    <original>A</original>
    <variation>D</variation>
    <location>
        <position position="823"/>
    </location>
</feature>